<dbReference type="EC" id="1.-.-.-" evidence="7"/>
<dbReference type="EMBL" id="AM920437">
    <property type="protein sequence ID" value="CAP99577.1"/>
    <property type="molecule type" value="Genomic_DNA"/>
</dbReference>
<dbReference type="RefSeq" id="XP_002566183.1">
    <property type="nucleotide sequence ID" value="XM_002566137.1"/>
</dbReference>
<dbReference type="SMR" id="B6HV36"/>
<dbReference type="STRING" id="500485.B6HV36"/>
<dbReference type="GlyCosmos" id="B6HV36">
    <property type="glycosylation" value="1 site, No reported glycans"/>
</dbReference>
<dbReference type="VEuPathDB" id="FungiDB:PCH_Pc22g22890"/>
<dbReference type="eggNOG" id="KOG2614">
    <property type="taxonomic scope" value="Eukaryota"/>
</dbReference>
<dbReference type="HOGENOM" id="CLU_009665_12_2_1"/>
<dbReference type="OMA" id="SIGLWPN"/>
<dbReference type="OrthoDB" id="10029326at2759"/>
<dbReference type="BioCyc" id="PCHR:PC22G22890-MONOMER"/>
<dbReference type="UniPathway" id="UPA00213"/>
<dbReference type="Proteomes" id="UP000000724">
    <property type="component" value="Contig Pc00c22"/>
</dbReference>
<dbReference type="GO" id="GO:0016020">
    <property type="term" value="C:membrane"/>
    <property type="evidence" value="ECO:0007669"/>
    <property type="project" value="UniProtKB-SubCell"/>
</dbReference>
<dbReference type="GO" id="GO:0071949">
    <property type="term" value="F:FAD binding"/>
    <property type="evidence" value="ECO:0007669"/>
    <property type="project" value="InterPro"/>
</dbReference>
<dbReference type="GO" id="GO:0004497">
    <property type="term" value="F:monooxygenase activity"/>
    <property type="evidence" value="ECO:0007669"/>
    <property type="project" value="UniProtKB-KW"/>
</dbReference>
<dbReference type="GO" id="GO:0016114">
    <property type="term" value="P:terpenoid biosynthetic process"/>
    <property type="evidence" value="ECO:0007669"/>
    <property type="project" value="UniProtKB-UniPathway"/>
</dbReference>
<dbReference type="Gene3D" id="3.50.50.60">
    <property type="entry name" value="FAD/NAD(P)-binding domain"/>
    <property type="match status" value="1"/>
</dbReference>
<dbReference type="InterPro" id="IPR002938">
    <property type="entry name" value="FAD-bd"/>
</dbReference>
<dbReference type="InterPro" id="IPR036188">
    <property type="entry name" value="FAD/NAD-bd_sf"/>
</dbReference>
<dbReference type="InterPro" id="IPR050562">
    <property type="entry name" value="FAD_mOase_fung"/>
</dbReference>
<dbReference type="PANTHER" id="PTHR47356:SF2">
    <property type="entry name" value="FAD-BINDING DOMAIN-CONTAINING PROTEIN-RELATED"/>
    <property type="match status" value="1"/>
</dbReference>
<dbReference type="PANTHER" id="PTHR47356">
    <property type="entry name" value="FAD-DEPENDENT MONOOXYGENASE ASQG-RELATED"/>
    <property type="match status" value="1"/>
</dbReference>
<dbReference type="Pfam" id="PF01494">
    <property type="entry name" value="FAD_binding_3"/>
    <property type="match status" value="2"/>
</dbReference>
<dbReference type="PRINTS" id="PR00420">
    <property type="entry name" value="RNGMNOXGNASE"/>
</dbReference>
<dbReference type="SUPFAM" id="SSF51905">
    <property type="entry name" value="FAD/NAD(P)-binding domain"/>
    <property type="match status" value="1"/>
</dbReference>
<name>ADRH_PENRW</name>
<keyword id="KW-0274">FAD</keyword>
<keyword id="KW-0285">Flavoprotein</keyword>
<keyword id="KW-0325">Glycoprotein</keyword>
<keyword id="KW-0472">Membrane</keyword>
<keyword id="KW-0503">Monooxygenase</keyword>
<keyword id="KW-0560">Oxidoreductase</keyword>
<keyword id="KW-1185">Reference proteome</keyword>
<keyword id="KW-0812">Transmembrane</keyword>
<keyword id="KW-1133">Transmembrane helix</keyword>
<protein>
    <recommendedName>
        <fullName evidence="5">FAD-dependent monooxygenase adrH</fullName>
        <ecNumber evidence="7">1.-.-.-</ecNumber>
    </recommendedName>
    <alternativeName>
        <fullName evidence="5">Andrastin A biosynthesis cluster protein H</fullName>
    </alternativeName>
</protein>
<reference key="1">
    <citation type="journal article" date="2008" name="Nat. Biotechnol.">
        <title>Genome sequencing and analysis of the filamentous fungus Penicillium chrysogenum.</title>
        <authorList>
            <person name="van den Berg M.A."/>
            <person name="Albang R."/>
            <person name="Albermann K."/>
            <person name="Badger J.H."/>
            <person name="Daran J.-M."/>
            <person name="Driessen A.J.M."/>
            <person name="Garcia-Estrada C."/>
            <person name="Fedorova N.D."/>
            <person name="Harris D.M."/>
            <person name="Heijne W.H.M."/>
            <person name="Joardar V.S."/>
            <person name="Kiel J.A.K.W."/>
            <person name="Kovalchuk A."/>
            <person name="Martin J.F."/>
            <person name="Nierman W.C."/>
            <person name="Nijland J.G."/>
            <person name="Pronk J.T."/>
            <person name="Roubos J.A."/>
            <person name="van der Klei I.J."/>
            <person name="van Peij N.N.M.E."/>
            <person name="Veenhuis M."/>
            <person name="von Doehren H."/>
            <person name="Wagner C."/>
            <person name="Wortman J.R."/>
            <person name="Bovenberg R.A.L."/>
        </authorList>
    </citation>
    <scope>NUCLEOTIDE SEQUENCE [LARGE SCALE GENOMIC DNA]</scope>
    <source>
        <strain>ATCC 28089 / DSM 1075 / NRRL 1951 / Wisconsin 54-1255</strain>
    </source>
</reference>
<reference key="2">
    <citation type="journal article" date="2013" name="Tetrahedron">
        <title>Reconstituted biosynthesis of fungal meroterpenoid andrastin A.</title>
        <authorList>
            <person name="Matsuda Y."/>
            <person name="Awakawa T."/>
            <person name="Abe I."/>
        </authorList>
    </citation>
    <scope>IDENTIFICATION</scope>
    <scope>FUNCTION</scope>
    <scope>CATALYTIC ACTIVITY</scope>
    <scope>PATHWAY</scope>
</reference>
<sequence>MADSMETHKFKVIIVGGSIAGLTLAHSLSKANIDHIVIEKRAEIAPQEGAFIGVWPNGAQILDQLGLYQSLEELTAPISRMHLSFPDDYSFSSFLPKTIHERFKYPIVSLDRQKVLEILFQNYPDKSNIITNQRVSEVRLLGDSASVVTEDGSVFRGDLIVGADGVHSPLTVEYACVFGISRPIPGLRSGEHINHYGDKFCVITFHGKDGRVFWFIIQKLDRVYTYPNAPRYSPNDAADLCGKMQNVVIWQDITVGDLWKTKVVASMTALEEGIFETWSLNRIVILGDSVHKMTPNIGQGANTAIEDVAVLASLINRMIHADDLNKPSESCIETMLQEYKSLRYEPAKSTYQRSRFGARFHTRDSWLKAVVGRYVFQYVGGLIENRTIKTLAGGDTIDFLPRPDRLETGRVAQFQKSEESPQRQWTLLWVSSLALFLFFPWLGSYLHSTIS</sequence>
<proteinExistence type="evidence at protein level"/>
<organism>
    <name type="scientific">Penicillium rubens (strain ATCC 28089 / DSM 1075 / NRRL 1951 / Wisconsin 54-1255)</name>
    <name type="common">Penicillium chrysogenum</name>
    <dbReference type="NCBI Taxonomy" id="500485"/>
    <lineage>
        <taxon>Eukaryota</taxon>
        <taxon>Fungi</taxon>
        <taxon>Dikarya</taxon>
        <taxon>Ascomycota</taxon>
        <taxon>Pezizomycotina</taxon>
        <taxon>Eurotiomycetes</taxon>
        <taxon>Eurotiomycetidae</taxon>
        <taxon>Eurotiales</taxon>
        <taxon>Aspergillaceae</taxon>
        <taxon>Penicillium</taxon>
        <taxon>Penicillium chrysogenum species complex</taxon>
    </lineage>
</organism>
<evidence type="ECO:0000250" key="1">
    <source>
        <dbReference type="UniProtKB" id="B8M9J8"/>
    </source>
</evidence>
<evidence type="ECO:0000255" key="2"/>
<evidence type="ECO:0000255" key="3">
    <source>
        <dbReference type="PROSITE-ProRule" id="PRU00498"/>
    </source>
</evidence>
<evidence type="ECO:0000269" key="4">
    <source ref="2"/>
</evidence>
<evidence type="ECO:0000303" key="5">
    <source ref="2"/>
</evidence>
<evidence type="ECO:0000305" key="6"/>
<evidence type="ECO:0000305" key="7">
    <source ref="2"/>
</evidence>
<comment type="function">
    <text evidence="4">FAD-dependent monooxygenase; part of the gene cluster that mediates the biosynthesis of andrastins, meroterpenoid compounds that exhibit inhibitory activity against ras farnesyltransferase, suggesting that they could be promising leads for antitumor agents (Ref.2). The first step of the pathway is the synthesis of 3,5-dimethylorsellinic acid (DMOA) by the polyketide synthase adrD via condensation of one acetyl-CoA starter unit with 3 malonyl-CoA units and 2 methylations (Ref.2). DMAO is then converted to farnesyl-DMAO by the prenyltransferase adrG (Ref.2). The methyltransferase adrK catalyzes the methylation of the carboxyl group of farnesyl-DMAO to farnesyl-DMAO methyl ester which is further converted to epoxyfarnesyl-DMAO methyl ester by the FAD-dependent monooxygenase adrH (Ref.2). The terpene cyclase adrI then catalyzes the carbon skeletal rearrangement to generate the andrastin E, the first compound in the pathway having the andrastin scaffold, with the tetracyclic ring system (Ref.2). The post-cyclization tailoring enzymes adrF, adrE, adrJ, and adrA, are involved in the conversion of andrastin E into andrastin A. The short chain dehydrogenase adrF is responsible for the oxidation of the C-3 a hydroxyl group of andrastin E to yield the corresponding ketone, andrastin D. The ketoreductase adrE stereoselectively reduces the carbonyl moiety to reverse the stereochemistry of the C-3 position to yield andrastin F. The acetyltransferase adrJ is the acetyltransferase that attaches the acetyl group to the C-3 hydroxyl group of andrastin F to yield andrastin C. Finally, the cytochrome P450 monooxygenase adrA catalyzes two sequential oxidation reactions of the C-23 methyl group, to generate the corresponding alcohol andrastin B, and aldehyde andrastin A (Ref.2).</text>
</comment>
<comment type="cofactor">
    <cofactor evidence="6">
        <name>FAD</name>
        <dbReference type="ChEBI" id="CHEBI:57692"/>
    </cofactor>
</comment>
<comment type="pathway">
    <text evidence="7">Secondary metabolite biosynthesis; terpenoid biosynthesis.</text>
</comment>
<comment type="subcellular location">
    <subcellularLocation>
        <location evidence="2">Membrane</location>
        <topology evidence="2">Single-pass membrane protein</topology>
    </subcellularLocation>
</comment>
<comment type="similarity">
    <text evidence="6">Belongs to the paxM FAD-dependent monooxygenase family.</text>
</comment>
<gene>
    <name evidence="5" type="primary">adrH</name>
    <name type="ORF">Pc22g22890</name>
</gene>
<accession>B6HV36</accession>
<feature type="chain" id="PRO_0000446492" description="FAD-dependent monooxygenase adrH">
    <location>
        <begin position="1"/>
        <end position="451"/>
    </location>
</feature>
<feature type="transmembrane region" description="Helical" evidence="2">
    <location>
        <begin position="426"/>
        <end position="446"/>
    </location>
</feature>
<feature type="active site" evidence="1">
    <location>
        <position position="196"/>
    </location>
</feature>
<feature type="binding site" evidence="1">
    <location>
        <position position="39"/>
    </location>
    <ligand>
        <name>FAD</name>
        <dbReference type="ChEBI" id="CHEBI:57692"/>
    </ligand>
</feature>
<feature type="binding site" evidence="1">
    <location>
        <position position="53"/>
    </location>
    <ligand>
        <name>FAD</name>
        <dbReference type="ChEBI" id="CHEBI:57692"/>
    </ligand>
</feature>
<feature type="binding site" evidence="1">
    <location>
        <position position="112"/>
    </location>
    <ligand>
        <name>FAD</name>
        <dbReference type="ChEBI" id="CHEBI:57692"/>
    </ligand>
</feature>
<feature type="binding site" evidence="1">
    <location>
        <position position="288"/>
    </location>
    <ligand>
        <name>FAD</name>
        <dbReference type="ChEBI" id="CHEBI:57692"/>
    </ligand>
</feature>
<feature type="binding site" evidence="1">
    <location>
        <position position="301"/>
    </location>
    <ligand>
        <name>FAD</name>
        <dbReference type="ChEBI" id="CHEBI:57692"/>
    </ligand>
</feature>
<feature type="glycosylation site" description="N-linked (GlcNAc...) asparagine" evidence="3">
    <location>
        <position position="385"/>
    </location>
</feature>